<name>RL7_LACCB</name>
<organism>
    <name type="scientific">Lacticaseibacillus casei (strain BL23)</name>
    <name type="common">Lactobacillus casei</name>
    <dbReference type="NCBI Taxonomy" id="543734"/>
    <lineage>
        <taxon>Bacteria</taxon>
        <taxon>Bacillati</taxon>
        <taxon>Bacillota</taxon>
        <taxon>Bacilli</taxon>
        <taxon>Lactobacillales</taxon>
        <taxon>Lactobacillaceae</taxon>
        <taxon>Lacticaseibacillus</taxon>
    </lineage>
</organism>
<gene>
    <name evidence="1" type="primary">rplL</name>
    <name type="ordered locus">LCABL_24540</name>
</gene>
<accession>B3WA01</accession>
<sequence>MALDVDGIIAQLKDASILELNDLVKSIEDEFGVKAAAPVAAGAAAGADAAAAKDTYDVELTEAGQEKVKVIKAVREITGLGLKDAKGMVDAAPKVIKEGLSEDDANKLKEQLEGVGATVTLK</sequence>
<dbReference type="EMBL" id="FM177140">
    <property type="protein sequence ID" value="CAQ67520.1"/>
    <property type="molecule type" value="Genomic_DNA"/>
</dbReference>
<dbReference type="SMR" id="B3WA01"/>
<dbReference type="KEGG" id="lcb:LCABL_24540"/>
<dbReference type="HOGENOM" id="CLU_086499_3_2_9"/>
<dbReference type="GO" id="GO:0022625">
    <property type="term" value="C:cytosolic large ribosomal subunit"/>
    <property type="evidence" value="ECO:0007669"/>
    <property type="project" value="TreeGrafter"/>
</dbReference>
<dbReference type="GO" id="GO:0003729">
    <property type="term" value="F:mRNA binding"/>
    <property type="evidence" value="ECO:0007669"/>
    <property type="project" value="TreeGrafter"/>
</dbReference>
<dbReference type="GO" id="GO:0003735">
    <property type="term" value="F:structural constituent of ribosome"/>
    <property type="evidence" value="ECO:0007669"/>
    <property type="project" value="InterPro"/>
</dbReference>
<dbReference type="GO" id="GO:0006412">
    <property type="term" value="P:translation"/>
    <property type="evidence" value="ECO:0007669"/>
    <property type="project" value="UniProtKB-UniRule"/>
</dbReference>
<dbReference type="CDD" id="cd00387">
    <property type="entry name" value="Ribosomal_L7_L12"/>
    <property type="match status" value="1"/>
</dbReference>
<dbReference type="FunFam" id="3.30.1390.10:FF:000001">
    <property type="entry name" value="50S ribosomal protein L7/L12"/>
    <property type="match status" value="1"/>
</dbReference>
<dbReference type="Gene3D" id="3.30.1390.10">
    <property type="match status" value="1"/>
</dbReference>
<dbReference type="Gene3D" id="1.20.5.710">
    <property type="entry name" value="Single helix bin"/>
    <property type="match status" value="1"/>
</dbReference>
<dbReference type="HAMAP" id="MF_00368">
    <property type="entry name" value="Ribosomal_bL12"/>
    <property type="match status" value="1"/>
</dbReference>
<dbReference type="InterPro" id="IPR000206">
    <property type="entry name" value="Ribosomal_bL12"/>
</dbReference>
<dbReference type="InterPro" id="IPR013823">
    <property type="entry name" value="Ribosomal_bL12_C"/>
</dbReference>
<dbReference type="InterPro" id="IPR014719">
    <property type="entry name" value="Ribosomal_bL12_C/ClpS-like"/>
</dbReference>
<dbReference type="InterPro" id="IPR008932">
    <property type="entry name" value="Ribosomal_bL12_oligo"/>
</dbReference>
<dbReference type="InterPro" id="IPR036235">
    <property type="entry name" value="Ribosomal_bL12_oligo_N_sf"/>
</dbReference>
<dbReference type="NCBIfam" id="TIGR00855">
    <property type="entry name" value="L12"/>
    <property type="match status" value="1"/>
</dbReference>
<dbReference type="PANTHER" id="PTHR45987">
    <property type="entry name" value="39S RIBOSOMAL PROTEIN L12"/>
    <property type="match status" value="1"/>
</dbReference>
<dbReference type="PANTHER" id="PTHR45987:SF4">
    <property type="entry name" value="LARGE RIBOSOMAL SUBUNIT PROTEIN BL12M"/>
    <property type="match status" value="1"/>
</dbReference>
<dbReference type="Pfam" id="PF00542">
    <property type="entry name" value="Ribosomal_L12"/>
    <property type="match status" value="1"/>
</dbReference>
<dbReference type="Pfam" id="PF16320">
    <property type="entry name" value="Ribosomal_L12_N"/>
    <property type="match status" value="1"/>
</dbReference>
<dbReference type="SUPFAM" id="SSF54736">
    <property type="entry name" value="ClpS-like"/>
    <property type="match status" value="1"/>
</dbReference>
<dbReference type="SUPFAM" id="SSF48300">
    <property type="entry name" value="Ribosomal protein L7/12, oligomerisation (N-terminal) domain"/>
    <property type="match status" value="1"/>
</dbReference>
<evidence type="ECO:0000255" key="1">
    <source>
        <dbReference type="HAMAP-Rule" id="MF_00368"/>
    </source>
</evidence>
<evidence type="ECO:0000305" key="2"/>
<reference key="1">
    <citation type="submission" date="2008-06" db="EMBL/GenBank/DDBJ databases">
        <title>Lactobacillus casei BL23 complete genome sequence.</title>
        <authorList>
            <person name="Maze A."/>
            <person name="Boel G."/>
            <person name="Bourand A."/>
            <person name="Loux V."/>
            <person name="Gibrat J.F."/>
            <person name="Zuniga M."/>
            <person name="Hartke A."/>
            <person name="Deutscher J."/>
        </authorList>
    </citation>
    <scope>NUCLEOTIDE SEQUENCE [LARGE SCALE GENOMIC DNA]</scope>
    <source>
        <strain>BL23</strain>
    </source>
</reference>
<keyword id="KW-0687">Ribonucleoprotein</keyword>
<keyword id="KW-0689">Ribosomal protein</keyword>
<proteinExistence type="inferred from homology"/>
<protein>
    <recommendedName>
        <fullName evidence="1">Large ribosomal subunit protein bL12</fullName>
    </recommendedName>
    <alternativeName>
        <fullName evidence="2">50S ribosomal protein L7/L12</fullName>
    </alternativeName>
</protein>
<comment type="function">
    <text evidence="1">Forms part of the ribosomal stalk which helps the ribosome interact with GTP-bound translation factors. Is thus essential for accurate translation.</text>
</comment>
<comment type="subunit">
    <text evidence="1">Homodimer. Part of the ribosomal stalk of the 50S ribosomal subunit. Forms a multimeric L10(L12)X complex, where L10 forms an elongated spine to which 2 to 4 L12 dimers bind in a sequential fashion. Binds GTP-bound translation factors.</text>
</comment>
<comment type="similarity">
    <text evidence="1">Belongs to the bacterial ribosomal protein bL12 family.</text>
</comment>
<feature type="chain" id="PRO_1000121452" description="Large ribosomal subunit protein bL12">
    <location>
        <begin position="1"/>
        <end position="122"/>
    </location>
</feature>